<comment type="function">
    <text evidence="1">Involved in coproporphyrin-dependent heme b biosynthesis. Catalyzes the decarboxylation of Fe-coproporphyrin III (coproheme) to heme b (protoheme IX), the last step of the pathway. The reaction occurs in a stepwise manner with a three-propionate intermediate.</text>
</comment>
<comment type="catalytic activity">
    <reaction evidence="1">
        <text>Fe-coproporphyrin III + 2 H2O2 + 2 H(+) = heme b + 2 CO2 + 4 H2O</text>
        <dbReference type="Rhea" id="RHEA:56516"/>
        <dbReference type="ChEBI" id="CHEBI:15377"/>
        <dbReference type="ChEBI" id="CHEBI:15378"/>
        <dbReference type="ChEBI" id="CHEBI:16240"/>
        <dbReference type="ChEBI" id="CHEBI:16526"/>
        <dbReference type="ChEBI" id="CHEBI:60344"/>
        <dbReference type="ChEBI" id="CHEBI:68438"/>
        <dbReference type="EC" id="1.3.98.5"/>
    </reaction>
    <physiologicalReaction direction="left-to-right" evidence="1">
        <dbReference type="Rhea" id="RHEA:56517"/>
    </physiologicalReaction>
</comment>
<comment type="catalytic activity">
    <reaction evidence="1">
        <text>Fe-coproporphyrin III + H2O2 + H(+) = harderoheme III + CO2 + 2 H2O</text>
        <dbReference type="Rhea" id="RHEA:57940"/>
        <dbReference type="ChEBI" id="CHEBI:15377"/>
        <dbReference type="ChEBI" id="CHEBI:15378"/>
        <dbReference type="ChEBI" id="CHEBI:16240"/>
        <dbReference type="ChEBI" id="CHEBI:16526"/>
        <dbReference type="ChEBI" id="CHEBI:68438"/>
        <dbReference type="ChEBI" id="CHEBI:142463"/>
    </reaction>
    <physiologicalReaction direction="left-to-right" evidence="1">
        <dbReference type="Rhea" id="RHEA:57941"/>
    </physiologicalReaction>
</comment>
<comment type="catalytic activity">
    <reaction evidence="1">
        <text>harderoheme III + H2O2 + H(+) = heme b + CO2 + 2 H2O</text>
        <dbReference type="Rhea" id="RHEA:57944"/>
        <dbReference type="ChEBI" id="CHEBI:15377"/>
        <dbReference type="ChEBI" id="CHEBI:15378"/>
        <dbReference type="ChEBI" id="CHEBI:16240"/>
        <dbReference type="ChEBI" id="CHEBI:16526"/>
        <dbReference type="ChEBI" id="CHEBI:60344"/>
        <dbReference type="ChEBI" id="CHEBI:142463"/>
    </reaction>
    <physiologicalReaction direction="left-to-right" evidence="1">
        <dbReference type="Rhea" id="RHEA:57945"/>
    </physiologicalReaction>
</comment>
<comment type="cofactor">
    <cofactor evidence="1">
        <name>Fe-coproporphyrin III</name>
        <dbReference type="ChEBI" id="CHEBI:68438"/>
    </cofactor>
    <text evidence="1">Fe-coproporphyrin III acts both as a substrate and a redox cofactor.</text>
</comment>
<comment type="pathway">
    <text evidence="1">Porphyrin-containing compound metabolism; protoheme biosynthesis.</text>
</comment>
<comment type="similarity">
    <text evidence="1">Belongs to the ChdC family. Type 1 subfamily.</text>
</comment>
<name>CHDC_BACLD</name>
<organism>
    <name type="scientific">Bacillus licheniformis (strain ATCC 14580 / DSM 13 / JCM 2505 / CCUG 7422 / NBRC 12200 / NCIMB 9375 / NCTC 10341 / NRRL NRS-1264 / Gibson 46)</name>
    <dbReference type="NCBI Taxonomy" id="279010"/>
    <lineage>
        <taxon>Bacteria</taxon>
        <taxon>Bacillati</taxon>
        <taxon>Bacillota</taxon>
        <taxon>Bacilli</taxon>
        <taxon>Bacillales</taxon>
        <taxon>Bacillaceae</taxon>
        <taxon>Bacillus</taxon>
    </lineage>
</organism>
<reference key="1">
    <citation type="journal article" date="2004" name="J. Mol. Microbiol. Biotechnol.">
        <title>The complete genome sequence of Bacillus licheniformis DSM13, an organism with great industrial potential.</title>
        <authorList>
            <person name="Veith B."/>
            <person name="Herzberg C."/>
            <person name="Steckel S."/>
            <person name="Feesche J."/>
            <person name="Maurer K.H."/>
            <person name="Ehrenreich P."/>
            <person name="Baeumer S."/>
            <person name="Henne A."/>
            <person name="Liesegang H."/>
            <person name="Merkl R."/>
            <person name="Ehrenreich A."/>
            <person name="Gottschalk G."/>
        </authorList>
    </citation>
    <scope>NUCLEOTIDE SEQUENCE [LARGE SCALE GENOMIC DNA]</scope>
    <source>
        <strain>ATCC 14580 / DSM 13 / JCM 2505 / CCUG 7422 / NBRC 12200 / NCIMB 9375 / NCTC 10341 / NRRL NRS-1264 / Gibson 46</strain>
    </source>
</reference>
<reference key="2">
    <citation type="journal article" date="2004" name="Genome Biol.">
        <title>Complete genome sequence of the industrial bacterium Bacillus licheniformis and comparisons with closely related Bacillus species.</title>
        <authorList>
            <person name="Rey M.W."/>
            <person name="Ramaiya P."/>
            <person name="Nelson B.A."/>
            <person name="Brody-Karpin S.D."/>
            <person name="Zaretsky E.J."/>
            <person name="Tang M."/>
            <person name="Lopez de Leon A."/>
            <person name="Xiang H."/>
            <person name="Gusti V."/>
            <person name="Clausen I.G."/>
            <person name="Olsen P.B."/>
            <person name="Rasmussen M.D."/>
            <person name="Andersen J.T."/>
            <person name="Joergensen P.L."/>
            <person name="Larsen T.S."/>
            <person name="Sorokin A."/>
            <person name="Bolotin A."/>
            <person name="Lapidus A."/>
            <person name="Galleron N."/>
            <person name="Ehrlich S.D."/>
            <person name="Berka R.M."/>
        </authorList>
    </citation>
    <scope>NUCLEOTIDE SEQUENCE [LARGE SCALE GENOMIC DNA]</scope>
    <source>
        <strain>ATCC 14580 / DSM 13 / JCM 2505 / CCUG 7422 / NBRC 12200 / NCIMB 9375 / NCTC 10341 / NRRL NRS-1264 / Gibson 46</strain>
    </source>
</reference>
<sequence length="254" mass="29395">MSEQQKTNEAAQTLDGWYALHDFRTMDWSAWKMLSSDERQIIISEFTGLLEKWGAAQKEGNGSHTLYSIVGQKADFMLMILRPTMEELNQIELEFNKSKLAEYTIPAYSYVSVVELSNYMGSGDGDPYENPQVRARLYPELPDAKYVCFYPMDKRRSGDDNWYMLSMEERRNLMRSHGMIGRGYAGKVKQIITGSIGFDDYEWGVTLFSDDVLQFKKLVYEMRFDEVSARYGEFGSFFVGNRLAKEQLPAFLHV</sequence>
<gene>
    <name evidence="1" type="primary">chdC</name>
    <name type="ordered locus">BLi03998</name>
    <name type="ordered locus">BL03956</name>
</gene>
<keyword id="KW-0349">Heme</keyword>
<keyword id="KW-0350">Heme biosynthesis</keyword>
<keyword id="KW-0408">Iron</keyword>
<keyword id="KW-0479">Metal-binding</keyword>
<keyword id="KW-0560">Oxidoreductase</keyword>
<keyword id="KW-1185">Reference proteome</keyword>
<proteinExistence type="inferred from homology"/>
<protein>
    <recommendedName>
        <fullName evidence="1">Coproheme decarboxylase</fullName>
        <ecNumber evidence="1">1.3.98.5</ecNumber>
    </recommendedName>
    <alternativeName>
        <fullName evidence="1">Coproheme III oxidative decarboxylase</fullName>
    </alternativeName>
    <alternativeName>
        <fullName evidence="1">Hydrogen peroxide-dependent heme synthase</fullName>
    </alternativeName>
</protein>
<dbReference type="EC" id="1.3.98.5" evidence="1"/>
<dbReference type="EMBL" id="AE017333">
    <property type="protein sequence ID" value="AAU42811.1"/>
    <property type="molecule type" value="Genomic_DNA"/>
</dbReference>
<dbReference type="EMBL" id="CP000002">
    <property type="protein sequence ID" value="AAU25436.1"/>
    <property type="molecule type" value="Genomic_DNA"/>
</dbReference>
<dbReference type="SMR" id="Q65DQ3"/>
<dbReference type="STRING" id="279010.BL03956"/>
<dbReference type="KEGG" id="bld:BLi03998"/>
<dbReference type="KEGG" id="bli:BL03956"/>
<dbReference type="eggNOG" id="COG3253">
    <property type="taxonomic scope" value="Bacteria"/>
</dbReference>
<dbReference type="HOGENOM" id="CLU_063226_1_0_9"/>
<dbReference type="UniPathway" id="UPA00252"/>
<dbReference type="Proteomes" id="UP000000606">
    <property type="component" value="Chromosome"/>
</dbReference>
<dbReference type="GO" id="GO:0020037">
    <property type="term" value="F:heme binding"/>
    <property type="evidence" value="ECO:0007669"/>
    <property type="project" value="InterPro"/>
</dbReference>
<dbReference type="GO" id="GO:0046872">
    <property type="term" value="F:metal ion binding"/>
    <property type="evidence" value="ECO:0007669"/>
    <property type="project" value="UniProtKB-KW"/>
</dbReference>
<dbReference type="GO" id="GO:0016634">
    <property type="term" value="F:oxidoreductase activity, acting on the CH-CH group of donors, oxygen as acceptor"/>
    <property type="evidence" value="ECO:0007669"/>
    <property type="project" value="UniProtKB-UniRule"/>
</dbReference>
<dbReference type="GO" id="GO:0004601">
    <property type="term" value="F:peroxidase activity"/>
    <property type="evidence" value="ECO:0007669"/>
    <property type="project" value="InterPro"/>
</dbReference>
<dbReference type="GO" id="GO:0006785">
    <property type="term" value="P:heme B biosynthetic process"/>
    <property type="evidence" value="ECO:0007669"/>
    <property type="project" value="UniProtKB-UniRule"/>
</dbReference>
<dbReference type="Gene3D" id="3.30.70.1030">
    <property type="entry name" value="Apc35880, domain 1"/>
    <property type="match status" value="2"/>
</dbReference>
<dbReference type="HAMAP" id="MF_01442">
    <property type="entry name" value="Coproheme_decarbox_1"/>
    <property type="match status" value="1"/>
</dbReference>
<dbReference type="InterPro" id="IPR031332">
    <property type="entry name" value="CHDC"/>
</dbReference>
<dbReference type="InterPro" id="IPR010644">
    <property type="entry name" value="ChdC/CLD"/>
</dbReference>
<dbReference type="InterPro" id="IPR011008">
    <property type="entry name" value="Dimeric_a/b-barrel"/>
</dbReference>
<dbReference type="NCBIfam" id="NF008913">
    <property type="entry name" value="PRK12276.1"/>
    <property type="match status" value="1"/>
</dbReference>
<dbReference type="PANTHER" id="PTHR36843:SF1">
    <property type="entry name" value="COPROHEME DECARBOXYLASE"/>
    <property type="match status" value="1"/>
</dbReference>
<dbReference type="PANTHER" id="PTHR36843">
    <property type="entry name" value="HEME-DEPENDENT PEROXIDASE YWFI-RELATED"/>
    <property type="match status" value="1"/>
</dbReference>
<dbReference type="Pfam" id="PF06778">
    <property type="entry name" value="Chlor_dismutase"/>
    <property type="match status" value="1"/>
</dbReference>
<dbReference type="SUPFAM" id="SSF54909">
    <property type="entry name" value="Dimeric alpha+beta barrel"/>
    <property type="match status" value="1"/>
</dbReference>
<accession>Q65DQ3</accession>
<accession>Q62P75</accession>
<evidence type="ECO:0000255" key="1">
    <source>
        <dbReference type="HAMAP-Rule" id="MF_01442"/>
    </source>
</evidence>
<feature type="chain" id="PRO_0000294036" description="Coproheme decarboxylase">
    <location>
        <begin position="1"/>
        <end position="254"/>
    </location>
</feature>
<feature type="active site" evidence="1">
    <location>
        <position position="150"/>
    </location>
</feature>
<feature type="binding site" evidence="1">
    <location>
        <position position="136"/>
    </location>
    <ligand>
        <name>Fe-coproporphyrin III</name>
        <dbReference type="ChEBI" id="CHEBI:68438"/>
    </ligand>
</feature>
<feature type="binding site" evidence="1">
    <location>
        <begin position="150"/>
        <end position="154"/>
    </location>
    <ligand>
        <name>Fe-coproporphyrin III</name>
        <dbReference type="ChEBI" id="CHEBI:68438"/>
    </ligand>
</feature>
<feature type="binding site" description="axial binding residue" evidence="1">
    <location>
        <position position="177"/>
    </location>
    <ligand>
        <name>Fe-coproporphyrin III</name>
        <dbReference type="ChEBI" id="CHEBI:68438"/>
    </ligand>
    <ligandPart>
        <name>Fe</name>
        <dbReference type="ChEBI" id="CHEBI:18248"/>
    </ligandPart>
</feature>
<feature type="binding site" evidence="1">
    <location>
        <position position="190"/>
    </location>
    <ligand>
        <name>Fe-coproporphyrin III</name>
        <dbReference type="ChEBI" id="CHEBI:68438"/>
    </ligand>
</feature>
<feature type="binding site" evidence="1">
    <location>
        <position position="228"/>
    </location>
    <ligand>
        <name>Fe-coproporphyrin III</name>
        <dbReference type="ChEBI" id="CHEBI:68438"/>
    </ligand>
</feature>